<accession>Q4JWV4</accession>
<dbReference type="EC" id="3.4.21.92" evidence="1"/>
<dbReference type="EMBL" id="CR931997">
    <property type="protein sequence ID" value="CAI36703.1"/>
    <property type="molecule type" value="Genomic_DNA"/>
</dbReference>
<dbReference type="RefSeq" id="WP_011273208.1">
    <property type="nucleotide sequence ID" value="NC_007164.1"/>
</dbReference>
<dbReference type="SMR" id="Q4JWV4"/>
<dbReference type="STRING" id="306537.jk0544"/>
<dbReference type="MEROPS" id="S14.008"/>
<dbReference type="KEGG" id="cjk:jk0544"/>
<dbReference type="PATRIC" id="fig|306537.10.peg.556"/>
<dbReference type="eggNOG" id="COG0740">
    <property type="taxonomic scope" value="Bacteria"/>
</dbReference>
<dbReference type="HOGENOM" id="CLU_058707_4_1_11"/>
<dbReference type="OrthoDB" id="9802800at2"/>
<dbReference type="Proteomes" id="UP000000545">
    <property type="component" value="Chromosome"/>
</dbReference>
<dbReference type="GO" id="GO:0005737">
    <property type="term" value="C:cytoplasm"/>
    <property type="evidence" value="ECO:0007669"/>
    <property type="project" value="UniProtKB-SubCell"/>
</dbReference>
<dbReference type="GO" id="GO:0009368">
    <property type="term" value="C:endopeptidase Clp complex"/>
    <property type="evidence" value="ECO:0007669"/>
    <property type="project" value="TreeGrafter"/>
</dbReference>
<dbReference type="GO" id="GO:0004176">
    <property type="term" value="F:ATP-dependent peptidase activity"/>
    <property type="evidence" value="ECO:0007669"/>
    <property type="project" value="InterPro"/>
</dbReference>
<dbReference type="GO" id="GO:0051117">
    <property type="term" value="F:ATPase binding"/>
    <property type="evidence" value="ECO:0007669"/>
    <property type="project" value="TreeGrafter"/>
</dbReference>
<dbReference type="GO" id="GO:0004252">
    <property type="term" value="F:serine-type endopeptidase activity"/>
    <property type="evidence" value="ECO:0007669"/>
    <property type="project" value="UniProtKB-UniRule"/>
</dbReference>
<dbReference type="GO" id="GO:0006515">
    <property type="term" value="P:protein quality control for misfolded or incompletely synthesized proteins"/>
    <property type="evidence" value="ECO:0007669"/>
    <property type="project" value="TreeGrafter"/>
</dbReference>
<dbReference type="CDD" id="cd07017">
    <property type="entry name" value="S14_ClpP_2"/>
    <property type="match status" value="1"/>
</dbReference>
<dbReference type="FunFam" id="3.90.226.10:FF:000002">
    <property type="entry name" value="ATP-dependent Clp protease proteolytic subunit"/>
    <property type="match status" value="1"/>
</dbReference>
<dbReference type="Gene3D" id="3.90.226.10">
    <property type="entry name" value="2-enoyl-CoA Hydratase, Chain A, domain 1"/>
    <property type="match status" value="1"/>
</dbReference>
<dbReference type="HAMAP" id="MF_00444">
    <property type="entry name" value="ClpP"/>
    <property type="match status" value="1"/>
</dbReference>
<dbReference type="InterPro" id="IPR001907">
    <property type="entry name" value="ClpP"/>
</dbReference>
<dbReference type="InterPro" id="IPR029045">
    <property type="entry name" value="ClpP/crotonase-like_dom_sf"/>
</dbReference>
<dbReference type="InterPro" id="IPR023562">
    <property type="entry name" value="ClpP/TepA"/>
</dbReference>
<dbReference type="InterPro" id="IPR033135">
    <property type="entry name" value="ClpP_His_AS"/>
</dbReference>
<dbReference type="NCBIfam" id="NF001368">
    <property type="entry name" value="PRK00277.1"/>
    <property type="match status" value="1"/>
</dbReference>
<dbReference type="NCBIfam" id="NF009205">
    <property type="entry name" value="PRK12553.1"/>
    <property type="match status" value="1"/>
</dbReference>
<dbReference type="PANTHER" id="PTHR10381">
    <property type="entry name" value="ATP-DEPENDENT CLP PROTEASE PROTEOLYTIC SUBUNIT"/>
    <property type="match status" value="1"/>
</dbReference>
<dbReference type="PANTHER" id="PTHR10381:SF70">
    <property type="entry name" value="ATP-DEPENDENT CLP PROTEASE PROTEOLYTIC SUBUNIT"/>
    <property type="match status" value="1"/>
</dbReference>
<dbReference type="Pfam" id="PF00574">
    <property type="entry name" value="CLP_protease"/>
    <property type="match status" value="1"/>
</dbReference>
<dbReference type="PRINTS" id="PR00127">
    <property type="entry name" value="CLPPROTEASEP"/>
</dbReference>
<dbReference type="SUPFAM" id="SSF52096">
    <property type="entry name" value="ClpP/crotonase"/>
    <property type="match status" value="1"/>
</dbReference>
<dbReference type="PROSITE" id="PS00382">
    <property type="entry name" value="CLP_PROTEASE_HIS"/>
    <property type="match status" value="1"/>
</dbReference>
<organism>
    <name type="scientific">Corynebacterium jeikeium (strain K411)</name>
    <dbReference type="NCBI Taxonomy" id="306537"/>
    <lineage>
        <taxon>Bacteria</taxon>
        <taxon>Bacillati</taxon>
        <taxon>Actinomycetota</taxon>
        <taxon>Actinomycetes</taxon>
        <taxon>Mycobacteriales</taxon>
        <taxon>Corynebacteriaceae</taxon>
        <taxon>Corynebacterium</taxon>
    </lineage>
</organism>
<evidence type="ECO:0000255" key="1">
    <source>
        <dbReference type="HAMAP-Rule" id="MF_00444"/>
    </source>
</evidence>
<proteinExistence type="inferred from homology"/>
<gene>
    <name evidence="1" type="primary">clpP1</name>
    <name type="ordered locus">jk0544</name>
</gene>
<comment type="function">
    <text evidence="1">Cleaves peptides in various proteins in a process that requires ATP hydrolysis. Has a chymotrypsin-like activity. Plays a major role in the degradation of misfolded proteins.</text>
</comment>
<comment type="catalytic activity">
    <reaction evidence="1">
        <text>Hydrolysis of proteins to small peptides in the presence of ATP and magnesium. alpha-casein is the usual test substrate. In the absence of ATP, only oligopeptides shorter than five residues are hydrolyzed (such as succinyl-Leu-Tyr-|-NHMec, and Leu-Tyr-Leu-|-Tyr-Trp, in which cleavage of the -Tyr-|-Leu- and -Tyr-|-Trp bonds also occurs).</text>
        <dbReference type="EC" id="3.4.21.92"/>
    </reaction>
</comment>
<comment type="subunit">
    <text evidence="1">Fourteen ClpP subunits assemble into 2 heptameric rings which stack back to back to give a disk-like structure with a central cavity, resembling the structure of eukaryotic proteasomes.</text>
</comment>
<comment type="subcellular location">
    <subcellularLocation>
        <location evidence="1">Cytoplasm</location>
    </subcellularLocation>
</comment>
<comment type="similarity">
    <text evidence="1">Belongs to the peptidase S14 family.</text>
</comment>
<name>CLPP1_CORJK</name>
<feature type="chain" id="PRO_0000226441" description="ATP-dependent Clp protease proteolytic subunit 1">
    <location>
        <begin position="1"/>
        <end position="188"/>
    </location>
</feature>
<feature type="active site" description="Nucleophile" evidence="1">
    <location>
        <position position="90"/>
    </location>
</feature>
<feature type="active site" evidence="1">
    <location>
        <position position="115"/>
    </location>
</feature>
<protein>
    <recommendedName>
        <fullName evidence="1">ATP-dependent Clp protease proteolytic subunit 1</fullName>
        <ecNumber evidence="1">3.4.21.92</ecNumber>
    </recommendedName>
    <alternativeName>
        <fullName evidence="1">Endopeptidase Clp 1</fullName>
    </alternativeName>
</protein>
<reference key="1">
    <citation type="journal article" date="2005" name="J. Bacteriol.">
        <title>Complete genome sequence and analysis of the multiresistant nosocomial pathogen Corynebacterium jeikeium K411, a lipid-requiring bacterium of the human skin flora.</title>
        <authorList>
            <person name="Tauch A."/>
            <person name="Kaiser O."/>
            <person name="Hain T."/>
            <person name="Goesmann A."/>
            <person name="Weisshaar B."/>
            <person name="Albersmeier A."/>
            <person name="Bekel T."/>
            <person name="Bischoff N."/>
            <person name="Brune I."/>
            <person name="Chakraborty T."/>
            <person name="Kalinowski J."/>
            <person name="Meyer F."/>
            <person name="Rupp O."/>
            <person name="Schneiker S."/>
            <person name="Viehoever P."/>
            <person name="Puehler A."/>
        </authorList>
    </citation>
    <scope>NUCLEOTIDE SEQUENCE [LARGE SCALE GENOMIC DNA]</scope>
    <source>
        <strain>K411</strain>
    </source>
</reference>
<keyword id="KW-0963">Cytoplasm</keyword>
<keyword id="KW-0378">Hydrolase</keyword>
<keyword id="KW-0645">Protease</keyword>
<keyword id="KW-1185">Reference proteome</keyword>
<keyword id="KW-0720">Serine protease</keyword>
<sequence>MSSETPNHRDSVYERLLRERIIFLGSQVDDEIANELCAQILLLSAEDPTRDISLYINSPGGSVTAGMAIYDTMKYAPCDIATYGMGLAASMGQFLLSAGTKGKRYALPHARIMMHQPSAGVGGTAADIAIQAEQFAYTKREMAELIAEFTGQTVEQITKDSDRDRWFTAQQAKEYGFVDHVITSAKES</sequence>